<gene>
    <name type="primary">moaD</name>
    <name type="ordered locus">Synpcc7942_1284</name>
</gene>
<protein>
    <recommendedName>
        <fullName>Molybdopterin synthase sulfur carrier subunit</fullName>
    </recommendedName>
    <alternativeName>
        <fullName>MPT synthase subunit 1</fullName>
    </alternativeName>
    <alternativeName>
        <fullName>Molybdenum cofactor biosynthesis protein D</fullName>
    </alternativeName>
    <alternativeName>
        <fullName>Molybdopterin-converting factor small subunit</fullName>
    </alternativeName>
    <alternativeName>
        <fullName>Molybdopterin-converting factor subunit 1</fullName>
    </alternativeName>
    <alternativeName>
        <fullName>Sulfur carrier protein MoaD</fullName>
    </alternativeName>
</protein>
<proteinExistence type="inferred from homology"/>
<reference key="1">
    <citation type="journal article" date="1998" name="J. Bacteriol.">
        <title>The narA locus of Synechococcus sp. strain PCC 7942 consists of a cluster of molybdopterin biosynthesis genes.</title>
        <authorList>
            <person name="Rubio L.M."/>
            <person name="Flores E."/>
            <person name="Herrero A."/>
        </authorList>
    </citation>
    <scope>NUCLEOTIDE SEQUENCE [GENOMIC DNA]</scope>
</reference>
<reference key="2">
    <citation type="submission" date="2005-08" db="EMBL/GenBank/DDBJ databases">
        <title>Complete sequence of chromosome 1 of Synechococcus elongatus PCC 7942.</title>
        <authorList>
            <consortium name="US DOE Joint Genome Institute"/>
            <person name="Copeland A."/>
            <person name="Lucas S."/>
            <person name="Lapidus A."/>
            <person name="Barry K."/>
            <person name="Detter J.C."/>
            <person name="Glavina T."/>
            <person name="Hammon N."/>
            <person name="Israni S."/>
            <person name="Pitluck S."/>
            <person name="Schmutz J."/>
            <person name="Larimer F."/>
            <person name="Land M."/>
            <person name="Kyrpides N."/>
            <person name="Lykidis A."/>
            <person name="Golden S."/>
            <person name="Richardson P."/>
        </authorList>
    </citation>
    <scope>NUCLEOTIDE SEQUENCE [LARGE SCALE GENOMIC DNA]</scope>
    <source>
        <strain>ATCC 33912 / PCC 7942 / FACHB-805</strain>
    </source>
</reference>
<feature type="chain" id="PRO_0000209133" description="Molybdopterin synthase sulfur carrier subunit">
    <location>
        <begin position="1"/>
        <end position="90"/>
    </location>
</feature>
<feature type="modified residue" description="1-thioglycine; alternate" evidence="1">
    <location>
        <position position="90"/>
    </location>
</feature>
<feature type="modified residue" description="Glycyl adenylate; alternate" evidence="1">
    <location>
        <position position="90"/>
    </location>
</feature>
<comment type="function">
    <text evidence="1">Involved in sulfur transfer in the conversion of molybdopterin precursor Z to molybdopterin.</text>
</comment>
<comment type="pathway">
    <text>Cofactor biosynthesis; molybdopterin biosynthesis.</text>
</comment>
<comment type="subunit">
    <text evidence="1">Heterotetramer of 2 MoaD subunits and 2 MoaE subunits. Forms a stable heterotetrameric complex of 2 MoaD and 2 MoeB during adenylation of MoaD by MoeB. During catalysis MoaD shuttles between the two heterotetrameric complexes (By similarity).</text>
</comment>
<comment type="similarity">
    <text evidence="2">Belongs to the MoaD family.</text>
</comment>
<accession>Q56209</accession>
<accession>Q31NQ5</accession>
<name>MOAD_SYNE7</name>
<evidence type="ECO:0000250" key="1"/>
<evidence type="ECO:0000305" key="2"/>
<keyword id="KW-0501">Molybdenum cofactor biosynthesis</keyword>
<keyword id="KW-0547">Nucleotide-binding</keyword>
<keyword id="KW-0597">Phosphoprotein</keyword>
<keyword id="KW-1185">Reference proteome</keyword>
<dbReference type="EMBL" id="X99625">
    <property type="protein sequence ID" value="CAA67946.1"/>
    <property type="molecule type" value="Genomic_DNA"/>
</dbReference>
<dbReference type="EMBL" id="CP000100">
    <property type="protein sequence ID" value="ABB57314.1"/>
    <property type="molecule type" value="Genomic_DNA"/>
</dbReference>
<dbReference type="RefSeq" id="WP_011377958.1">
    <property type="nucleotide sequence ID" value="NZ_JACJTX010000003.1"/>
</dbReference>
<dbReference type="SMR" id="Q56209"/>
<dbReference type="STRING" id="1140.Synpcc7942_1284"/>
<dbReference type="PaxDb" id="1140-Synpcc7942_1284"/>
<dbReference type="GeneID" id="72430145"/>
<dbReference type="KEGG" id="syf:Synpcc7942_1284"/>
<dbReference type="HOGENOM" id="CLU_2439693_0_0_3"/>
<dbReference type="BioCyc" id="SYNEL:SYNPCC7942_1284-MONOMER"/>
<dbReference type="UniPathway" id="UPA00344"/>
<dbReference type="Proteomes" id="UP000889800">
    <property type="component" value="Chromosome"/>
</dbReference>
<dbReference type="GO" id="GO:0000166">
    <property type="term" value="F:nucleotide binding"/>
    <property type="evidence" value="ECO:0007669"/>
    <property type="project" value="UniProtKB-KW"/>
</dbReference>
<dbReference type="GO" id="GO:0006777">
    <property type="term" value="P:Mo-molybdopterin cofactor biosynthetic process"/>
    <property type="evidence" value="ECO:0007669"/>
    <property type="project" value="UniProtKB-KW"/>
</dbReference>
<organism>
    <name type="scientific">Synechococcus elongatus (strain ATCC 33912 / PCC 7942 / FACHB-805)</name>
    <name type="common">Anacystis nidulans R2</name>
    <dbReference type="NCBI Taxonomy" id="1140"/>
    <lineage>
        <taxon>Bacteria</taxon>
        <taxon>Bacillati</taxon>
        <taxon>Cyanobacteriota</taxon>
        <taxon>Cyanophyceae</taxon>
        <taxon>Synechococcales</taxon>
        <taxon>Synechococcaceae</taxon>
        <taxon>Synechococcus</taxon>
    </lineage>
</organism>
<sequence>MTTTITLICFGGLAALSPEGQPMPLELDLPATAADLKVAIARACDLMPDSALAQLLQKSAIGSETRIYIDSDLIPASLSHLALLPPVSGG</sequence>